<name>RL27_MARSD</name>
<comment type="similarity">
    <text evidence="1">Belongs to the bacterial ribosomal protein bL27 family.</text>
</comment>
<dbReference type="EMBL" id="CP001649">
    <property type="protein sequence ID" value="ACS78919.1"/>
    <property type="molecule type" value="Genomic_DNA"/>
</dbReference>
<dbReference type="RefSeq" id="WP_015850738.1">
    <property type="nucleotide sequence ID" value="NC_012881.1"/>
</dbReference>
<dbReference type="SMR" id="C6BZ95"/>
<dbReference type="STRING" id="526222.Desal_0853"/>
<dbReference type="KEGG" id="dsa:Desal_0853"/>
<dbReference type="eggNOG" id="COG0211">
    <property type="taxonomic scope" value="Bacteria"/>
</dbReference>
<dbReference type="HOGENOM" id="CLU_095424_4_0_7"/>
<dbReference type="OrthoDB" id="9803474at2"/>
<dbReference type="Proteomes" id="UP000002601">
    <property type="component" value="Chromosome"/>
</dbReference>
<dbReference type="GO" id="GO:0022625">
    <property type="term" value="C:cytosolic large ribosomal subunit"/>
    <property type="evidence" value="ECO:0007669"/>
    <property type="project" value="TreeGrafter"/>
</dbReference>
<dbReference type="GO" id="GO:0003735">
    <property type="term" value="F:structural constituent of ribosome"/>
    <property type="evidence" value="ECO:0007669"/>
    <property type="project" value="InterPro"/>
</dbReference>
<dbReference type="GO" id="GO:0006412">
    <property type="term" value="P:translation"/>
    <property type="evidence" value="ECO:0007669"/>
    <property type="project" value="UniProtKB-UniRule"/>
</dbReference>
<dbReference type="FunFam" id="2.40.50.100:FF:000060">
    <property type="entry name" value="Apicoplast ribosomal protein L27"/>
    <property type="match status" value="1"/>
</dbReference>
<dbReference type="Gene3D" id="2.40.50.100">
    <property type="match status" value="1"/>
</dbReference>
<dbReference type="HAMAP" id="MF_00539">
    <property type="entry name" value="Ribosomal_bL27"/>
    <property type="match status" value="1"/>
</dbReference>
<dbReference type="InterPro" id="IPR001684">
    <property type="entry name" value="Ribosomal_bL27"/>
</dbReference>
<dbReference type="NCBIfam" id="TIGR00062">
    <property type="entry name" value="L27"/>
    <property type="match status" value="1"/>
</dbReference>
<dbReference type="PANTHER" id="PTHR15893:SF0">
    <property type="entry name" value="LARGE RIBOSOMAL SUBUNIT PROTEIN BL27M"/>
    <property type="match status" value="1"/>
</dbReference>
<dbReference type="PANTHER" id="PTHR15893">
    <property type="entry name" value="RIBOSOMAL PROTEIN L27"/>
    <property type="match status" value="1"/>
</dbReference>
<dbReference type="Pfam" id="PF01016">
    <property type="entry name" value="Ribosomal_L27"/>
    <property type="match status" value="1"/>
</dbReference>
<dbReference type="PRINTS" id="PR00063">
    <property type="entry name" value="RIBOSOMALL27"/>
</dbReference>
<dbReference type="SUPFAM" id="SSF110324">
    <property type="entry name" value="Ribosomal L27 protein-like"/>
    <property type="match status" value="1"/>
</dbReference>
<reference key="1">
    <citation type="submission" date="2009-06" db="EMBL/GenBank/DDBJ databases">
        <title>Complete sequence of Desulfovibrio salexigens DSM 2638.</title>
        <authorList>
            <consortium name="US DOE Joint Genome Institute"/>
            <person name="Lucas S."/>
            <person name="Copeland A."/>
            <person name="Lapidus A."/>
            <person name="Glavina del Rio T."/>
            <person name="Tice H."/>
            <person name="Bruce D."/>
            <person name="Goodwin L."/>
            <person name="Pitluck S."/>
            <person name="Munk A.C."/>
            <person name="Brettin T."/>
            <person name="Detter J.C."/>
            <person name="Han C."/>
            <person name="Tapia R."/>
            <person name="Larimer F."/>
            <person name="Land M."/>
            <person name="Hauser L."/>
            <person name="Kyrpides N."/>
            <person name="Anderson I."/>
            <person name="Wall J.D."/>
            <person name="Arkin A.P."/>
            <person name="Dehal P."/>
            <person name="Chivian D."/>
            <person name="Giles B."/>
            <person name="Hazen T.C."/>
        </authorList>
    </citation>
    <scope>NUCLEOTIDE SEQUENCE [LARGE SCALE GENOMIC DNA]</scope>
    <source>
        <strain>ATCC 14822 / DSM 2638 / NCIMB 8403 / VKM B-1763</strain>
    </source>
</reference>
<proteinExistence type="inferred from homology"/>
<accession>C6BZ95</accession>
<gene>
    <name evidence="1" type="primary">rpmA</name>
    <name type="ordered locus">Desal_0853</name>
</gene>
<feature type="chain" id="PRO_1000211922" description="Large ribosomal subunit protein bL27">
    <location>
        <begin position="1"/>
        <end position="89"/>
    </location>
</feature>
<feature type="region of interest" description="Disordered" evidence="2">
    <location>
        <begin position="1"/>
        <end position="26"/>
    </location>
</feature>
<keyword id="KW-1185">Reference proteome</keyword>
<keyword id="KW-0687">Ribonucleoprotein</keyword>
<keyword id="KW-0689">Ribosomal protein</keyword>
<organism>
    <name type="scientific">Maridesulfovibrio salexigens (strain ATCC 14822 / DSM 2638 / NCIMB 8403 / VKM B-1763)</name>
    <name type="common">Desulfovibrio salexigens</name>
    <dbReference type="NCBI Taxonomy" id="526222"/>
    <lineage>
        <taxon>Bacteria</taxon>
        <taxon>Pseudomonadati</taxon>
        <taxon>Thermodesulfobacteriota</taxon>
        <taxon>Desulfovibrionia</taxon>
        <taxon>Desulfovibrionales</taxon>
        <taxon>Desulfovibrionaceae</taxon>
        <taxon>Maridesulfovibrio</taxon>
    </lineage>
</organism>
<sequence length="89" mass="9698">MAHKKAGGSSKNGRDSNAQRRGVKRFGGQEVLAGNILVRQVGSKVHAGKNVGTGKDWTLFALVDGVVKYEKYIRKNRVKTRVHIVPAEA</sequence>
<evidence type="ECO:0000255" key="1">
    <source>
        <dbReference type="HAMAP-Rule" id="MF_00539"/>
    </source>
</evidence>
<evidence type="ECO:0000256" key="2">
    <source>
        <dbReference type="SAM" id="MobiDB-lite"/>
    </source>
</evidence>
<evidence type="ECO:0000305" key="3"/>
<protein>
    <recommendedName>
        <fullName evidence="1">Large ribosomal subunit protein bL27</fullName>
    </recommendedName>
    <alternativeName>
        <fullName evidence="3">50S ribosomal protein L27</fullName>
    </alternativeName>
</protein>